<keyword id="KW-0004">4Fe-4S</keyword>
<keyword id="KW-0067">ATP-binding</keyword>
<keyword id="KW-0149">Chlorophyll biosynthesis</keyword>
<keyword id="KW-0150">Chloroplast</keyword>
<keyword id="KW-0408">Iron</keyword>
<keyword id="KW-0411">Iron-sulfur</keyword>
<keyword id="KW-0479">Metal-binding</keyword>
<keyword id="KW-0547">Nucleotide-binding</keyword>
<keyword id="KW-0560">Oxidoreductase</keyword>
<keyword id="KW-0602">Photosynthesis</keyword>
<keyword id="KW-0934">Plastid</keyword>
<comment type="function">
    <text evidence="1">Component of the dark-operative protochlorophyllide reductase (DPOR) that uses Mg-ATP and reduced ferredoxin to reduce ring D of protochlorophyllide (Pchlide) to form chlorophyllide a (Chlide). This reaction is light-independent. The NB-protein (ChlN-ChlB) is the catalytic component of the complex (By similarity).</text>
</comment>
<comment type="catalytic activity">
    <reaction>
        <text>chlorophyllide a + oxidized 2[4Fe-4S]-[ferredoxin] + 2 ADP + 2 phosphate = protochlorophyllide a + reduced 2[4Fe-4S]-[ferredoxin] + 2 ATP + 2 H2O</text>
        <dbReference type="Rhea" id="RHEA:28202"/>
        <dbReference type="Rhea" id="RHEA-COMP:10002"/>
        <dbReference type="Rhea" id="RHEA-COMP:10004"/>
        <dbReference type="ChEBI" id="CHEBI:15377"/>
        <dbReference type="ChEBI" id="CHEBI:30616"/>
        <dbReference type="ChEBI" id="CHEBI:33722"/>
        <dbReference type="ChEBI" id="CHEBI:33723"/>
        <dbReference type="ChEBI" id="CHEBI:43474"/>
        <dbReference type="ChEBI" id="CHEBI:83348"/>
        <dbReference type="ChEBI" id="CHEBI:83350"/>
        <dbReference type="ChEBI" id="CHEBI:456216"/>
        <dbReference type="EC" id="1.3.7.7"/>
    </reaction>
</comment>
<comment type="cofactor">
    <cofactor evidence="1">
        <name>[4Fe-4S] cluster</name>
        <dbReference type="ChEBI" id="CHEBI:49883"/>
    </cofactor>
    <text evidence="1">Binds 1 [4Fe-4S] cluster per heterodimer. The cluster is bound at the heterodimer interface by residues from both subunits.</text>
</comment>
<comment type="pathway">
    <text>Porphyrin-containing compound metabolism; chlorophyll biosynthesis (light-independent).</text>
</comment>
<comment type="subunit">
    <text evidence="1">Protochlorophyllide reductase is composed of three subunits; ChlL, ChlN and ChlB. Forms a heterotetramer of two ChlB and two ChlN subunits (By similarity).</text>
</comment>
<comment type="subcellular location">
    <subcellularLocation>
        <location>Plastid</location>
        <location>Chloroplast</location>
    </subcellularLocation>
</comment>
<comment type="similarity">
    <text evidence="2">Belongs to the ChlB/BchB/BchZ family.</text>
</comment>
<evidence type="ECO:0000250" key="1"/>
<evidence type="ECO:0000305" key="2"/>
<protein>
    <recommendedName>
        <fullName>Light-independent protochlorophyllide reductase subunit B</fullName>
        <shortName>DPOR subunit B</shortName>
        <shortName>LI-POR subunit B</shortName>
        <ecNumber>1.3.7.7</ecNumber>
    </recommendedName>
</protein>
<sequence>KRLPGESGVSVNQVIPEGASLKYLKDLPRAWFNAVPYREVGLMTATFSEKEYGMPYISITPMGISNTADFIEQIGKLVNVWASVLSERKLNYRLYVENQTKFV</sequence>
<accession>P37851</accession>
<gene>
    <name type="primary">chlB</name>
</gene>
<name>CHLB_CLACY</name>
<proteinExistence type="inferred from homology"/>
<dbReference type="EC" id="1.3.7.7"/>
<dbReference type="EMBL" id="L25771">
    <property type="protein sequence ID" value="AAC37492.1"/>
    <property type="molecule type" value="Genomic_DNA"/>
</dbReference>
<dbReference type="SMR" id="P37851"/>
<dbReference type="UniPathway" id="UPA00670"/>
<dbReference type="GO" id="GO:0009507">
    <property type="term" value="C:chloroplast"/>
    <property type="evidence" value="ECO:0007669"/>
    <property type="project" value="UniProtKB-SubCell"/>
</dbReference>
<dbReference type="GO" id="GO:0051539">
    <property type="term" value="F:4 iron, 4 sulfur cluster binding"/>
    <property type="evidence" value="ECO:0007669"/>
    <property type="project" value="UniProtKB-KW"/>
</dbReference>
<dbReference type="GO" id="GO:0005524">
    <property type="term" value="F:ATP binding"/>
    <property type="evidence" value="ECO:0007669"/>
    <property type="project" value="UniProtKB-KW"/>
</dbReference>
<dbReference type="GO" id="GO:0046872">
    <property type="term" value="F:metal ion binding"/>
    <property type="evidence" value="ECO:0007669"/>
    <property type="project" value="UniProtKB-KW"/>
</dbReference>
<dbReference type="GO" id="GO:0016491">
    <property type="term" value="F:oxidoreductase activity"/>
    <property type="evidence" value="ECO:0007669"/>
    <property type="project" value="UniProtKB-KW"/>
</dbReference>
<dbReference type="GO" id="GO:0036068">
    <property type="term" value="P:light-independent chlorophyll biosynthetic process"/>
    <property type="evidence" value="ECO:0007669"/>
    <property type="project" value="UniProtKB-UniPathway"/>
</dbReference>
<dbReference type="GO" id="GO:0015979">
    <property type="term" value="P:photosynthesis"/>
    <property type="evidence" value="ECO:0007669"/>
    <property type="project" value="UniProtKB-KW"/>
</dbReference>
<dbReference type="Gene3D" id="3.40.50.1980">
    <property type="entry name" value="Nitrogenase molybdenum iron protein domain"/>
    <property type="match status" value="1"/>
</dbReference>
<dbReference type="InterPro" id="IPR050152">
    <property type="entry name" value="ChlB/BchB/BchZ"/>
</dbReference>
<dbReference type="InterPro" id="IPR000510">
    <property type="entry name" value="Nase/OxRdtase_comp1"/>
</dbReference>
<dbReference type="PANTHER" id="PTHR33712">
    <property type="entry name" value="LIGHT-INDEPENDENT PROTOCHLOROPHYLLIDE REDUCTASE SUBUNIT B"/>
    <property type="match status" value="1"/>
</dbReference>
<dbReference type="PANTHER" id="PTHR33712:SF7">
    <property type="entry name" value="LIGHT-INDEPENDENT PROTOCHLOROPHYLLIDE REDUCTASE SUBUNIT B"/>
    <property type="match status" value="1"/>
</dbReference>
<dbReference type="Pfam" id="PF00148">
    <property type="entry name" value="Oxidored_nitro"/>
    <property type="match status" value="1"/>
</dbReference>
<dbReference type="SUPFAM" id="SSF53807">
    <property type="entry name" value="Helical backbone' metal receptor"/>
    <property type="match status" value="1"/>
</dbReference>
<reference key="1">
    <citation type="journal article" date="1996" name="Mol. Phylogenet. Evol.">
        <title>Phylogenetic inferences from chloroplast chlB gene sequences of Nephrolepis exaltata (Filicopsida), Ephedra altissima (Gnetopsida), and diverse land plants.</title>
        <authorList>
            <person name="Boivin R."/>
            <person name="Richard M."/>
            <person name="Beauseigle D."/>
            <person name="Bousquet J."/>
            <person name="Bellemare G."/>
        </authorList>
    </citation>
    <scope>NUCLEOTIDE SEQUENCE [GENOMIC DNA]</scope>
</reference>
<feature type="chain" id="PRO_0000219834" description="Light-independent protochlorophyllide reductase subunit B">
    <location>
        <begin position="1" status="less than"/>
        <end position="103" status="greater than"/>
    </location>
</feature>
<feature type="non-terminal residue">
    <location>
        <position position="1"/>
    </location>
</feature>
<feature type="non-terminal residue">
    <location>
        <position position="103"/>
    </location>
</feature>
<geneLocation type="chloroplast"/>
<organism>
    <name type="scientific">Claytosmunda claytoniana</name>
    <name type="common">Interrupted fern</name>
    <name type="synonym">Osmunda claytoniana</name>
    <dbReference type="NCBI Taxonomy" id="29589"/>
    <lineage>
        <taxon>Eukaryota</taxon>
        <taxon>Viridiplantae</taxon>
        <taxon>Streptophyta</taxon>
        <taxon>Embryophyta</taxon>
        <taxon>Tracheophyta</taxon>
        <taxon>Polypodiopsida</taxon>
        <taxon>Polypodiidae</taxon>
        <taxon>Osmundales</taxon>
        <taxon>Osmundaceae</taxon>
        <taxon>Claytosmunda</taxon>
    </lineage>
</organism>